<accession>Q75VQ4</accession>
<evidence type="ECO:0000255" key="1">
    <source>
        <dbReference type="HAMAP-Rule" id="MF_04071"/>
    </source>
</evidence>
<evidence type="ECO:0000256" key="2">
    <source>
        <dbReference type="SAM" id="MobiDB-lite"/>
    </source>
</evidence>
<protein>
    <recommendedName>
        <fullName evidence="1">Neuraminidase</fullName>
        <ecNumber evidence="1">3.2.1.18</ecNumber>
    </recommendedName>
</protein>
<sequence length="469" mass="52186">MNPNQKIITIGSVSLTIATVCFLMQIAILVTTVTLHFKQYECDSPASNQVMPCEPIIIERNITEIVYLNNTTIDKEKCPKVVEYRNWSKPQCQITGFAPFSKDNSIRLSAGGDIWVTREPYVSCDHGKCYQFALGQGTTLDNKHSNDTIHDRIPHRTLLMNELGVPFHLGTRQVCIAWSSSSCHDGKAWLHVCITGDDKNATASFIYDGRLVDSIGSWSQNILRTQESECVCINGTCTVVMTDGSASGRADTRILFIEEGKIVHISPLSGSAQHVEECSCYPRYPGVRCICRDNWKGSNRPVVDINMEDYSIDSSYVCSGLVGDTPRNDDRSSNSNCRNPNNERGNQGVKGWAFDNGDDVWMGRTISKDLRSGYETFKVIGGWSTPNSKSQINRQVIVDSDNRSGYSGIFSVEGKSCINRCFYVELIRGRKQETRVWWTSNSIVVFCGTSGTYGTGSWPDGANINFMPI</sequence>
<keyword id="KW-0106">Calcium</keyword>
<keyword id="KW-1015">Disulfide bond</keyword>
<keyword id="KW-0325">Glycoprotein</keyword>
<keyword id="KW-0326">Glycosidase</keyword>
<keyword id="KW-1032">Host cell membrane</keyword>
<keyword id="KW-1043">Host membrane</keyword>
<keyword id="KW-0378">Hydrolase</keyword>
<keyword id="KW-0472">Membrane</keyword>
<keyword id="KW-0479">Metal-binding</keyword>
<keyword id="KW-1185">Reference proteome</keyword>
<keyword id="KW-0735">Signal-anchor</keyword>
<keyword id="KW-0812">Transmembrane</keyword>
<keyword id="KW-1133">Transmembrane helix</keyword>
<keyword id="KW-0946">Virion</keyword>
<name>NRAM_I68A0</name>
<comment type="function">
    <text evidence="1">Catalyzes the removal of terminal sialic acid residues from viral and cellular glycoconjugates. Cleaves off the terminal sialic acids on the glycosylated HA during virus budding to facilitate virus release. Additionally helps virus spread through the circulation by further removing sialic acids from the cell surface. These cleavages prevent self-aggregation and ensure the efficient spread of the progeny virus from cell to cell. Otherwise, infection would be limited to one round of replication. Described as a receptor-destroying enzyme because it cleaves a terminal sialic acid from the cellular receptors. May facilitate viral invasion of the upper airways by cleaving the sialic acid moieties on the mucin of the airway epithelial cells. Likely to plays a role in the budding process through its association with lipid rafts during intracellular transport. May additionally display a raft-association independent effect on budding. Plays a role in the determination of host range restriction on replication and virulence. Sialidase activity in late endosome/lysosome traffic seems to enhance virus replication.</text>
</comment>
<comment type="catalytic activity">
    <reaction evidence="1">
        <text>Hydrolysis of alpha-(2-&gt;3)-, alpha-(2-&gt;6)-, alpha-(2-&gt;8)- glycosidic linkages of terminal sialic acid residues in oligosaccharides, glycoproteins, glycolipids, colominic acid and synthetic substrates.</text>
        <dbReference type="EC" id="3.2.1.18"/>
    </reaction>
</comment>
<comment type="cofactor">
    <cofactor evidence="1">
        <name>Ca(2+)</name>
        <dbReference type="ChEBI" id="CHEBI:29108"/>
    </cofactor>
</comment>
<comment type="activity regulation">
    <text evidence="1">Inhibited by the neuraminidase inhibitors zanamivir (Relenza) and oseltamivir (Tamiflu). These drugs interfere with the release of progeny virus from infected cells and are effective against all influenza strains. Resistance to neuraminidase inhibitors is quite rare.</text>
</comment>
<comment type="subunit">
    <text evidence="1">Homotetramer.</text>
</comment>
<comment type="subcellular location">
    <subcellularLocation>
        <location evidence="1">Virion membrane</location>
    </subcellularLocation>
    <subcellularLocation>
        <location evidence="1">Host apical cell membrane</location>
        <topology evidence="1">Single-pass type II membrane protein</topology>
    </subcellularLocation>
    <text evidence="1">Preferentially accumulates at the apical plasma membrane in infected polarized epithelial cells, which is the virus assembly site. Uses lipid rafts for cell surface transport and apical sorting. In the virion, forms a mushroom-shaped spike on the surface of the membrane.</text>
</comment>
<comment type="domain">
    <text evidence="1">Intact N-terminus is essential for virion morphogenesis. Possesses two apical sorting signals, one in the ectodomain, which is likely to be a glycan, and the other in the transmembrane domain. The transmembrane domain also plays a role in lipid raft association.</text>
</comment>
<comment type="PTM">
    <text evidence="1">N-glycosylated.</text>
</comment>
<comment type="miscellaneous">
    <text>The influenza A genome consist of 8 RNA segments. Genetic variation of hemagglutinin and/or neuraminidase genes results in the emergence of new influenza strains. The mechanism of variation can be the result of point mutations or the result of genetic reassortment between segments of two different strains.</text>
</comment>
<comment type="similarity">
    <text evidence="1">Belongs to the glycosyl hydrolase 34 family.</text>
</comment>
<proteinExistence type="inferred from homology"/>
<organismHost>
    <name type="scientific">Aves</name>
    <dbReference type="NCBI Taxonomy" id="8782"/>
</organismHost>
<organismHost>
    <name type="scientific">Cetacea</name>
    <name type="common">whales</name>
    <dbReference type="NCBI Taxonomy" id="9721"/>
</organismHost>
<organismHost>
    <name type="scientific">Homo sapiens</name>
    <name type="common">Human</name>
    <dbReference type="NCBI Taxonomy" id="9606"/>
</organismHost>
<organismHost>
    <name type="scientific">Phocidae</name>
    <name type="common">true seals</name>
    <dbReference type="NCBI Taxonomy" id="9709"/>
</organismHost>
<organismHost>
    <name type="scientific">Sus scrofa</name>
    <name type="common">Pig</name>
    <dbReference type="NCBI Taxonomy" id="9823"/>
</organismHost>
<reference key="1">
    <citation type="journal article" date="2004" name="FEBS Lett.">
        <title>Evolutional analysis of human influenza A virus N2 neuraminidase genes based on the transition of the low-pH stability of sialidase activity.</title>
        <authorList>
            <person name="Suzuki T."/>
            <person name="Takahashi T."/>
            <person name="Saito T."/>
            <person name="Guo C.T."/>
            <person name="Hidari K.I.-P.J."/>
            <person name="Miyamoto D."/>
            <person name="Suzuki Y."/>
        </authorList>
    </citation>
    <scope>NUCLEOTIDE SEQUENCE [GENOMIC RNA]</scope>
</reference>
<reference key="2">
    <citation type="journal article" date="2004" name="Virus Res.">
        <title>Assembly and budding of influenza virus.</title>
        <authorList>
            <person name="Nayak D.P."/>
            <person name="Hui E.K."/>
            <person name="Barman S."/>
        </authorList>
    </citation>
    <scope>REVIEW</scope>
</reference>
<reference key="3">
    <citation type="journal article" date="2005" name="N. Engl. J. Med.">
        <title>Neuraminidase inhibitors for influenza.</title>
        <authorList>
            <person name="Moscona A."/>
        </authorList>
    </citation>
    <scope>REVIEW</scope>
</reference>
<reference key="4">
    <citation type="journal article" date="2005" name="Biol. Pharm. Bull.">
        <title>Sialobiology of influenza: molecular mechanism of host range variation of influenza viruses.</title>
        <authorList>
            <person name="Suzuki Y."/>
        </authorList>
    </citation>
    <scope>REVIEW</scope>
</reference>
<feature type="chain" id="PRO_0000280119" description="Neuraminidase">
    <location>
        <begin position="1"/>
        <end position="469"/>
    </location>
</feature>
<feature type="topological domain" description="Intravirion" evidence="1">
    <location>
        <begin position="1"/>
        <end position="9"/>
    </location>
</feature>
<feature type="transmembrane region" description="Helical" evidence="1">
    <location>
        <begin position="10"/>
        <end position="30"/>
    </location>
</feature>
<feature type="topological domain" description="Virion surface" evidence="1">
    <location>
        <begin position="31"/>
        <end position="469"/>
    </location>
</feature>
<feature type="region of interest" description="Involved in apical transport and lipid raft association" evidence="1">
    <location>
        <begin position="11"/>
        <end position="33"/>
    </location>
</feature>
<feature type="region of interest" description="Hypervariable stalk region" evidence="1">
    <location>
        <begin position="36"/>
        <end position="88"/>
    </location>
</feature>
<feature type="region of interest" description="Head of neuraminidase" evidence="1">
    <location>
        <begin position="91"/>
        <end position="469"/>
    </location>
</feature>
<feature type="region of interest" description="Disordered" evidence="2">
    <location>
        <begin position="324"/>
        <end position="350"/>
    </location>
</feature>
<feature type="compositionally biased region" description="Low complexity" evidence="2">
    <location>
        <begin position="333"/>
        <end position="342"/>
    </location>
</feature>
<feature type="active site" description="Proton donor/acceptor" evidence="1">
    <location>
        <position position="151"/>
    </location>
</feature>
<feature type="active site" description="Nucleophile" evidence="1">
    <location>
        <position position="406"/>
    </location>
</feature>
<feature type="binding site" evidence="1">
    <location>
        <position position="118"/>
    </location>
    <ligand>
        <name>substrate</name>
    </ligand>
</feature>
<feature type="binding site" evidence="1">
    <location>
        <position position="152"/>
    </location>
    <ligand>
        <name>substrate</name>
    </ligand>
</feature>
<feature type="binding site" evidence="1">
    <location>
        <begin position="276"/>
        <end position="277"/>
    </location>
    <ligand>
        <name>substrate</name>
    </ligand>
</feature>
<feature type="binding site" evidence="1">
    <location>
        <position position="292"/>
    </location>
    <ligand>
        <name>substrate</name>
    </ligand>
</feature>
<feature type="binding site" evidence="1">
    <location>
        <position position="293"/>
    </location>
    <ligand>
        <name>Ca(2+)</name>
        <dbReference type="ChEBI" id="CHEBI:29108"/>
    </ligand>
</feature>
<feature type="binding site" evidence="1">
    <location>
        <position position="297"/>
    </location>
    <ligand>
        <name>Ca(2+)</name>
        <dbReference type="ChEBI" id="CHEBI:29108"/>
    </ligand>
</feature>
<feature type="binding site" evidence="1">
    <location>
        <position position="324"/>
    </location>
    <ligand>
        <name>Ca(2+)</name>
        <dbReference type="ChEBI" id="CHEBI:29108"/>
    </ligand>
</feature>
<feature type="binding site" evidence="1">
    <location>
        <position position="371"/>
    </location>
    <ligand>
        <name>substrate</name>
    </ligand>
</feature>
<feature type="glycosylation site" description="N-linked (GlcNAc...) asparagine; by host" evidence="1">
    <location>
        <position position="61"/>
    </location>
</feature>
<feature type="glycosylation site" description="N-linked (GlcNAc...) asparagine; by host" evidence="1">
    <location>
        <position position="69"/>
    </location>
</feature>
<feature type="glycosylation site" description="N-linked (GlcNAc...) asparagine; by host" evidence="1">
    <location>
        <position position="70"/>
    </location>
</feature>
<feature type="glycosylation site" description="N-linked (GlcNAc...) asparagine; by host" evidence="1">
    <location>
        <position position="86"/>
    </location>
</feature>
<feature type="glycosylation site" description="N-linked (GlcNAc...) asparagine; by host" evidence="1">
    <location>
        <position position="146"/>
    </location>
</feature>
<feature type="glycosylation site" description="N-linked (GlcNAc...) asparagine; by host" evidence="1">
    <location>
        <position position="200"/>
    </location>
</feature>
<feature type="glycosylation site" description="N-linked (GlcNAc...) asparagine; by host" evidence="1">
    <location>
        <position position="234"/>
    </location>
</feature>
<feature type="glycosylation site" description="N-linked (GlcNAc...) asparagine; by host" evidence="1">
    <location>
        <position position="402"/>
    </location>
</feature>
<feature type="disulfide bond" evidence="1">
    <location>
        <begin position="92"/>
        <end position="417"/>
    </location>
</feature>
<feature type="disulfide bond" evidence="1">
    <location>
        <begin position="124"/>
        <end position="129"/>
    </location>
</feature>
<feature type="disulfide bond" evidence="1">
    <location>
        <begin position="183"/>
        <end position="230"/>
    </location>
</feature>
<feature type="disulfide bond" evidence="1">
    <location>
        <begin position="232"/>
        <end position="237"/>
    </location>
</feature>
<feature type="disulfide bond" evidence="1">
    <location>
        <begin position="278"/>
        <end position="291"/>
    </location>
</feature>
<feature type="disulfide bond" evidence="1">
    <location>
        <begin position="280"/>
        <end position="289"/>
    </location>
</feature>
<feature type="disulfide bond" evidence="1">
    <location>
        <begin position="318"/>
        <end position="337"/>
    </location>
</feature>
<feature type="disulfide bond" evidence="1">
    <location>
        <begin position="421"/>
        <end position="447"/>
    </location>
</feature>
<gene>
    <name evidence="1" type="primary">NA</name>
</gene>
<dbReference type="EC" id="3.2.1.18" evidence="1"/>
<dbReference type="EMBL" id="AB124658">
    <property type="protein sequence ID" value="BAD16642.1"/>
    <property type="molecule type" value="Genomic_RNA"/>
</dbReference>
<dbReference type="SMR" id="Q75VQ4"/>
<dbReference type="BindingDB" id="Q75VQ4"/>
<dbReference type="ChEMBL" id="CHEMBL1287607"/>
<dbReference type="DrugCentral" id="Q75VQ4"/>
<dbReference type="CAZy" id="GH34">
    <property type="family name" value="Glycoside Hydrolase Family 34"/>
</dbReference>
<dbReference type="GlyCosmos" id="Q75VQ4">
    <property type="glycosylation" value="8 sites, No reported glycans"/>
</dbReference>
<dbReference type="SABIO-RK" id="Q75VQ4"/>
<dbReference type="Proteomes" id="UP000137932">
    <property type="component" value="Genome"/>
</dbReference>
<dbReference type="GO" id="GO:0020002">
    <property type="term" value="C:host cell plasma membrane"/>
    <property type="evidence" value="ECO:0007669"/>
    <property type="project" value="UniProtKB-SubCell"/>
</dbReference>
<dbReference type="GO" id="GO:0016020">
    <property type="term" value="C:membrane"/>
    <property type="evidence" value="ECO:0007669"/>
    <property type="project" value="UniProtKB-UniRule"/>
</dbReference>
<dbReference type="GO" id="GO:0055036">
    <property type="term" value="C:virion membrane"/>
    <property type="evidence" value="ECO:0007669"/>
    <property type="project" value="UniProtKB-SubCell"/>
</dbReference>
<dbReference type="GO" id="GO:0004308">
    <property type="term" value="F:exo-alpha-sialidase activity"/>
    <property type="evidence" value="ECO:0007669"/>
    <property type="project" value="UniProtKB-UniRule"/>
</dbReference>
<dbReference type="GO" id="GO:0046872">
    <property type="term" value="F:metal ion binding"/>
    <property type="evidence" value="ECO:0007669"/>
    <property type="project" value="UniProtKB-UniRule"/>
</dbReference>
<dbReference type="GO" id="GO:0005975">
    <property type="term" value="P:carbohydrate metabolic process"/>
    <property type="evidence" value="ECO:0007669"/>
    <property type="project" value="InterPro"/>
</dbReference>
<dbReference type="GO" id="GO:0046761">
    <property type="term" value="P:viral budding from plasma membrane"/>
    <property type="evidence" value="ECO:0007669"/>
    <property type="project" value="UniProtKB-UniRule"/>
</dbReference>
<dbReference type="CDD" id="cd15483">
    <property type="entry name" value="Influenza_NA"/>
    <property type="match status" value="1"/>
</dbReference>
<dbReference type="Gene3D" id="2.120.10.10">
    <property type="match status" value="1"/>
</dbReference>
<dbReference type="HAMAP" id="MF_04071">
    <property type="entry name" value="INFV_NRAM"/>
    <property type="match status" value="1"/>
</dbReference>
<dbReference type="InterPro" id="IPR001860">
    <property type="entry name" value="Glyco_hydro_34"/>
</dbReference>
<dbReference type="InterPro" id="IPR033654">
    <property type="entry name" value="Sialidase_Influenza_A/B"/>
</dbReference>
<dbReference type="InterPro" id="IPR036278">
    <property type="entry name" value="Sialidase_sf"/>
</dbReference>
<dbReference type="Pfam" id="PF00064">
    <property type="entry name" value="Neur"/>
    <property type="match status" value="1"/>
</dbReference>
<dbReference type="SUPFAM" id="SSF50939">
    <property type="entry name" value="Sialidases"/>
    <property type="match status" value="1"/>
</dbReference>
<organism>
    <name type="scientific">Influenza A virus (strain A/Aichi/2/1968 H3N2)</name>
    <dbReference type="NCBI Taxonomy" id="387139"/>
    <lineage>
        <taxon>Viruses</taxon>
        <taxon>Riboviria</taxon>
        <taxon>Orthornavirae</taxon>
        <taxon>Negarnaviricota</taxon>
        <taxon>Polyploviricotina</taxon>
        <taxon>Insthoviricetes</taxon>
        <taxon>Articulavirales</taxon>
        <taxon>Orthomyxoviridae</taxon>
        <taxon>Alphainfluenzavirus</taxon>
        <taxon>Alphainfluenzavirus influenzae</taxon>
        <taxon>Influenza A virus</taxon>
    </lineage>
</organism>